<keyword id="KW-1185">Reference proteome</keyword>
<keyword id="KW-0687">Ribonucleoprotein</keyword>
<keyword id="KW-0689">Ribosomal protein</keyword>
<feature type="chain" id="PRO_0000170206" description="Large ribosomal subunit protein bL33">
    <location>
        <begin position="1"/>
        <end position="56"/>
    </location>
</feature>
<comment type="similarity">
    <text evidence="1">Belongs to the bacterial ribosomal protein bL33 family.</text>
</comment>
<dbReference type="EMBL" id="AJ235273">
    <property type="protein sequence ID" value="CAA15301.1"/>
    <property type="molecule type" value="Genomic_DNA"/>
</dbReference>
<dbReference type="PIR" id="E71650">
    <property type="entry name" value="E71650"/>
</dbReference>
<dbReference type="RefSeq" id="NP_221225.1">
    <property type="nucleotide sequence ID" value="NC_000963.1"/>
</dbReference>
<dbReference type="RefSeq" id="WP_004596729.1">
    <property type="nucleotide sequence ID" value="NC_000963.1"/>
</dbReference>
<dbReference type="SMR" id="Q9ZC89"/>
<dbReference type="STRING" id="272947.gene:17555948"/>
<dbReference type="EnsemblBacteria" id="CAA15301">
    <property type="protein sequence ID" value="CAA15301"/>
    <property type="gene ID" value="CAA15301"/>
</dbReference>
<dbReference type="GeneID" id="57570002"/>
<dbReference type="KEGG" id="rpr:RP879"/>
<dbReference type="PATRIC" id="fig|272947.5.peg.917"/>
<dbReference type="eggNOG" id="COG0267">
    <property type="taxonomic scope" value="Bacteria"/>
</dbReference>
<dbReference type="HOGENOM" id="CLU_190949_1_0_5"/>
<dbReference type="OrthoDB" id="21586at2"/>
<dbReference type="Proteomes" id="UP000002480">
    <property type="component" value="Chromosome"/>
</dbReference>
<dbReference type="GO" id="GO:0005737">
    <property type="term" value="C:cytoplasm"/>
    <property type="evidence" value="ECO:0007669"/>
    <property type="project" value="UniProtKB-ARBA"/>
</dbReference>
<dbReference type="GO" id="GO:0015934">
    <property type="term" value="C:large ribosomal subunit"/>
    <property type="evidence" value="ECO:0007669"/>
    <property type="project" value="TreeGrafter"/>
</dbReference>
<dbReference type="GO" id="GO:0003735">
    <property type="term" value="F:structural constituent of ribosome"/>
    <property type="evidence" value="ECO:0007669"/>
    <property type="project" value="InterPro"/>
</dbReference>
<dbReference type="GO" id="GO:0006412">
    <property type="term" value="P:translation"/>
    <property type="evidence" value="ECO:0007669"/>
    <property type="project" value="UniProtKB-UniRule"/>
</dbReference>
<dbReference type="Gene3D" id="2.20.28.120">
    <property type="entry name" value="Ribosomal protein L33"/>
    <property type="match status" value="1"/>
</dbReference>
<dbReference type="HAMAP" id="MF_00294">
    <property type="entry name" value="Ribosomal_bL33"/>
    <property type="match status" value="1"/>
</dbReference>
<dbReference type="InterPro" id="IPR001705">
    <property type="entry name" value="Ribosomal_bL33"/>
</dbReference>
<dbReference type="InterPro" id="IPR018264">
    <property type="entry name" value="Ribosomal_bL33_CS"/>
</dbReference>
<dbReference type="InterPro" id="IPR038584">
    <property type="entry name" value="Ribosomal_bL33_sf"/>
</dbReference>
<dbReference type="InterPro" id="IPR011332">
    <property type="entry name" value="Ribosomal_zn-bd"/>
</dbReference>
<dbReference type="NCBIfam" id="NF001860">
    <property type="entry name" value="PRK00595.1"/>
    <property type="match status" value="1"/>
</dbReference>
<dbReference type="NCBIfam" id="TIGR01023">
    <property type="entry name" value="rpmG_bact"/>
    <property type="match status" value="1"/>
</dbReference>
<dbReference type="PANTHER" id="PTHR15238">
    <property type="entry name" value="54S RIBOSOMAL PROTEIN L39, MITOCHONDRIAL"/>
    <property type="match status" value="1"/>
</dbReference>
<dbReference type="PANTHER" id="PTHR15238:SF1">
    <property type="entry name" value="LARGE RIBOSOMAL SUBUNIT PROTEIN BL33M"/>
    <property type="match status" value="1"/>
</dbReference>
<dbReference type="Pfam" id="PF00471">
    <property type="entry name" value="Ribosomal_L33"/>
    <property type="match status" value="1"/>
</dbReference>
<dbReference type="SUPFAM" id="SSF57829">
    <property type="entry name" value="Zn-binding ribosomal proteins"/>
    <property type="match status" value="1"/>
</dbReference>
<dbReference type="PROSITE" id="PS00582">
    <property type="entry name" value="RIBOSOMAL_L33"/>
    <property type="match status" value="1"/>
</dbReference>
<name>RL33_RICPR</name>
<evidence type="ECO:0000305" key="1"/>
<sequence>MAKKNKNVLVRLVSTAGTGVFWVKKRNPRTQTEKLSFRKYDKVVRKHVLFKEEKIK</sequence>
<protein>
    <recommendedName>
        <fullName evidence="1">Large ribosomal subunit protein bL33</fullName>
    </recommendedName>
    <alternativeName>
        <fullName>50S ribosomal protein L33</fullName>
    </alternativeName>
</protein>
<gene>
    <name type="primary">rpmG</name>
    <name type="ordered locus">RP879</name>
</gene>
<proteinExistence type="inferred from homology"/>
<accession>Q9ZC89</accession>
<reference key="1">
    <citation type="journal article" date="1998" name="Nature">
        <title>The genome sequence of Rickettsia prowazekii and the origin of mitochondria.</title>
        <authorList>
            <person name="Andersson S.G.E."/>
            <person name="Zomorodipour A."/>
            <person name="Andersson J.O."/>
            <person name="Sicheritz-Ponten T."/>
            <person name="Alsmark U.C.M."/>
            <person name="Podowski R.M."/>
            <person name="Naeslund A.K."/>
            <person name="Eriksson A.-S."/>
            <person name="Winkler H.H."/>
            <person name="Kurland C.G."/>
        </authorList>
    </citation>
    <scope>NUCLEOTIDE SEQUENCE [LARGE SCALE GENOMIC DNA]</scope>
    <source>
        <strain>Madrid E</strain>
    </source>
</reference>
<organism>
    <name type="scientific">Rickettsia prowazekii (strain Madrid E)</name>
    <dbReference type="NCBI Taxonomy" id="272947"/>
    <lineage>
        <taxon>Bacteria</taxon>
        <taxon>Pseudomonadati</taxon>
        <taxon>Pseudomonadota</taxon>
        <taxon>Alphaproteobacteria</taxon>
        <taxon>Rickettsiales</taxon>
        <taxon>Rickettsiaceae</taxon>
        <taxon>Rickettsieae</taxon>
        <taxon>Rickettsia</taxon>
        <taxon>typhus group</taxon>
    </lineage>
</organism>